<organism>
    <name type="scientific">Pyrobaculum aerophilum (strain ATCC 51768 / DSM 7523 / JCM 9630 / CIP 104966 / NBRC 100827 / IM2)</name>
    <dbReference type="NCBI Taxonomy" id="178306"/>
    <lineage>
        <taxon>Archaea</taxon>
        <taxon>Thermoproteota</taxon>
        <taxon>Thermoprotei</taxon>
        <taxon>Thermoproteales</taxon>
        <taxon>Thermoproteaceae</taxon>
        <taxon>Pyrobaculum</taxon>
    </lineage>
</organism>
<reference key="1">
    <citation type="journal article" date="2002" name="Proc. Natl. Acad. Sci. U.S.A.">
        <title>Genome sequence of the hyperthermophilic crenarchaeon Pyrobaculum aerophilum.</title>
        <authorList>
            <person name="Fitz-Gibbon S.T."/>
            <person name="Ladner H."/>
            <person name="Kim U.-J."/>
            <person name="Stetter K.O."/>
            <person name="Simon M.I."/>
            <person name="Miller J.H."/>
        </authorList>
    </citation>
    <scope>NUCLEOTIDE SEQUENCE [LARGE SCALE GENOMIC DNA]</scope>
    <source>
        <strain>ATCC 51768 / DSM 7523 / JCM 9630 / CIP 104966 / NBRC 100827 / IM2</strain>
    </source>
</reference>
<comment type="function">
    <text evidence="1">Small subunit of the glutamine-dependent carbamoyl phosphate synthetase (CPSase). CPSase catalyzes the formation of carbamoyl phosphate from the ammonia moiety of glutamine, carbonate, and phosphate donated by ATP, constituting the first step of 2 biosynthetic pathways, one leading to arginine and/or urea and the other to pyrimidine nucleotides. The small subunit (glutamine amidotransferase) binds and cleaves glutamine to supply the large subunit with the substrate ammonia.</text>
</comment>
<comment type="catalytic activity">
    <reaction evidence="1">
        <text>hydrogencarbonate + L-glutamine + 2 ATP + H2O = carbamoyl phosphate + L-glutamate + 2 ADP + phosphate + 2 H(+)</text>
        <dbReference type="Rhea" id="RHEA:18633"/>
        <dbReference type="ChEBI" id="CHEBI:15377"/>
        <dbReference type="ChEBI" id="CHEBI:15378"/>
        <dbReference type="ChEBI" id="CHEBI:17544"/>
        <dbReference type="ChEBI" id="CHEBI:29985"/>
        <dbReference type="ChEBI" id="CHEBI:30616"/>
        <dbReference type="ChEBI" id="CHEBI:43474"/>
        <dbReference type="ChEBI" id="CHEBI:58228"/>
        <dbReference type="ChEBI" id="CHEBI:58359"/>
        <dbReference type="ChEBI" id="CHEBI:456216"/>
        <dbReference type="EC" id="6.3.5.5"/>
    </reaction>
</comment>
<comment type="catalytic activity">
    <molecule>Carbamoyl phosphate synthase small chain</molecule>
    <reaction evidence="1">
        <text>L-glutamine + H2O = L-glutamate + NH4(+)</text>
        <dbReference type="Rhea" id="RHEA:15889"/>
        <dbReference type="ChEBI" id="CHEBI:15377"/>
        <dbReference type="ChEBI" id="CHEBI:28938"/>
        <dbReference type="ChEBI" id="CHEBI:29985"/>
        <dbReference type="ChEBI" id="CHEBI:58359"/>
    </reaction>
</comment>
<comment type="pathway">
    <text evidence="1">Amino-acid biosynthesis; L-arginine biosynthesis; carbamoyl phosphate from bicarbonate: step 1/1.</text>
</comment>
<comment type="pathway">
    <text evidence="1">Pyrimidine metabolism; UMP biosynthesis via de novo pathway; (S)-dihydroorotate from bicarbonate: step 1/3.</text>
</comment>
<comment type="subunit">
    <text evidence="1">Composed of two chains; the small (or glutamine) chain promotes the hydrolysis of glutamine to ammonia, which is used by the large (or ammonia) chain to synthesize carbamoyl phosphate. Tetramer of heterodimers (alpha,beta)4.</text>
</comment>
<comment type="similarity">
    <text evidence="1">Belongs to the CarA family.</text>
</comment>
<protein>
    <recommendedName>
        <fullName evidence="1">Carbamoyl phosphate synthase small chain</fullName>
        <ecNumber evidence="1">6.3.5.5</ecNumber>
    </recommendedName>
    <alternativeName>
        <fullName evidence="1">Carbamoyl phosphate synthetase glutamine chain</fullName>
    </alternativeName>
</protein>
<evidence type="ECO:0000255" key="1">
    <source>
        <dbReference type="HAMAP-Rule" id="MF_01209"/>
    </source>
</evidence>
<keyword id="KW-0028">Amino-acid biosynthesis</keyword>
<keyword id="KW-0055">Arginine biosynthesis</keyword>
<keyword id="KW-0067">ATP-binding</keyword>
<keyword id="KW-0315">Glutamine amidotransferase</keyword>
<keyword id="KW-0436">Ligase</keyword>
<keyword id="KW-0547">Nucleotide-binding</keyword>
<keyword id="KW-0665">Pyrimidine biosynthesis</keyword>
<keyword id="KW-1185">Reference proteome</keyword>
<dbReference type="EC" id="6.3.5.5" evidence="1"/>
<dbReference type="EMBL" id="AE009441">
    <property type="protein sequence ID" value="AAL63147.1"/>
    <property type="molecule type" value="Genomic_DNA"/>
</dbReference>
<dbReference type="RefSeq" id="WP_011007619.1">
    <property type="nucleotide sequence ID" value="NC_003364.1"/>
</dbReference>
<dbReference type="SMR" id="Q8ZY49"/>
<dbReference type="FunCoup" id="Q8ZY49">
    <property type="interactions" value="227"/>
</dbReference>
<dbReference type="STRING" id="178306.PAE0946"/>
<dbReference type="MEROPS" id="C26.A33"/>
<dbReference type="EnsemblBacteria" id="AAL63147">
    <property type="protein sequence ID" value="AAL63147"/>
    <property type="gene ID" value="PAE0946"/>
</dbReference>
<dbReference type="GeneID" id="1465382"/>
<dbReference type="KEGG" id="pai:PAE0946"/>
<dbReference type="PATRIC" id="fig|178306.9.peg.700"/>
<dbReference type="eggNOG" id="arCOG00064">
    <property type="taxonomic scope" value="Archaea"/>
</dbReference>
<dbReference type="HOGENOM" id="CLU_035901_1_1_2"/>
<dbReference type="InParanoid" id="Q8ZY49"/>
<dbReference type="UniPathway" id="UPA00068">
    <property type="reaction ID" value="UER00171"/>
</dbReference>
<dbReference type="UniPathway" id="UPA00070">
    <property type="reaction ID" value="UER00115"/>
</dbReference>
<dbReference type="Proteomes" id="UP000002439">
    <property type="component" value="Chromosome"/>
</dbReference>
<dbReference type="GO" id="GO:0005951">
    <property type="term" value="C:carbamoyl-phosphate synthase complex"/>
    <property type="evidence" value="ECO:0000318"/>
    <property type="project" value="GO_Central"/>
</dbReference>
<dbReference type="GO" id="GO:0005737">
    <property type="term" value="C:cytoplasm"/>
    <property type="evidence" value="ECO:0000318"/>
    <property type="project" value="GO_Central"/>
</dbReference>
<dbReference type="GO" id="GO:0005524">
    <property type="term" value="F:ATP binding"/>
    <property type="evidence" value="ECO:0007669"/>
    <property type="project" value="UniProtKB-UniRule"/>
</dbReference>
<dbReference type="GO" id="GO:0004088">
    <property type="term" value="F:carbamoyl-phosphate synthase (glutamine-hydrolyzing) activity"/>
    <property type="evidence" value="ECO:0007669"/>
    <property type="project" value="UniProtKB-UniRule"/>
</dbReference>
<dbReference type="GO" id="GO:0004359">
    <property type="term" value="F:glutaminase activity"/>
    <property type="evidence" value="ECO:0007669"/>
    <property type="project" value="RHEA"/>
</dbReference>
<dbReference type="GO" id="GO:0006207">
    <property type="term" value="P:'de novo' pyrimidine nucleobase biosynthetic process"/>
    <property type="evidence" value="ECO:0007669"/>
    <property type="project" value="InterPro"/>
</dbReference>
<dbReference type="GO" id="GO:0044205">
    <property type="term" value="P:'de novo' UMP biosynthetic process"/>
    <property type="evidence" value="ECO:0007669"/>
    <property type="project" value="UniProtKB-UniRule"/>
</dbReference>
<dbReference type="GO" id="GO:0006541">
    <property type="term" value="P:glutamine metabolic process"/>
    <property type="evidence" value="ECO:0007669"/>
    <property type="project" value="InterPro"/>
</dbReference>
<dbReference type="GO" id="GO:0006526">
    <property type="term" value="P:L-arginine biosynthetic process"/>
    <property type="evidence" value="ECO:0000318"/>
    <property type="project" value="GO_Central"/>
</dbReference>
<dbReference type="CDD" id="cd01744">
    <property type="entry name" value="GATase1_CPSase"/>
    <property type="match status" value="1"/>
</dbReference>
<dbReference type="Gene3D" id="3.40.50.880">
    <property type="match status" value="1"/>
</dbReference>
<dbReference type="Gene3D" id="3.50.30.20">
    <property type="entry name" value="Carbamoyl-phosphate synthase small subunit, N-terminal domain"/>
    <property type="match status" value="1"/>
</dbReference>
<dbReference type="HAMAP" id="MF_01209">
    <property type="entry name" value="CPSase_S_chain"/>
    <property type="match status" value="1"/>
</dbReference>
<dbReference type="InterPro" id="IPR050472">
    <property type="entry name" value="Anth_synth/Amidotransfase"/>
</dbReference>
<dbReference type="InterPro" id="IPR006274">
    <property type="entry name" value="CarbamoylP_synth_ssu"/>
</dbReference>
<dbReference type="InterPro" id="IPR002474">
    <property type="entry name" value="CarbamoylP_synth_ssu_N"/>
</dbReference>
<dbReference type="InterPro" id="IPR036480">
    <property type="entry name" value="CarbP_synth_ssu_N_sf"/>
</dbReference>
<dbReference type="InterPro" id="IPR029062">
    <property type="entry name" value="Class_I_gatase-like"/>
</dbReference>
<dbReference type="InterPro" id="IPR035686">
    <property type="entry name" value="CPSase_GATase1"/>
</dbReference>
<dbReference type="InterPro" id="IPR017926">
    <property type="entry name" value="GATASE"/>
</dbReference>
<dbReference type="NCBIfam" id="TIGR01368">
    <property type="entry name" value="CPSaseIIsmall"/>
    <property type="match status" value="1"/>
</dbReference>
<dbReference type="NCBIfam" id="NF009475">
    <property type="entry name" value="PRK12838.1"/>
    <property type="match status" value="1"/>
</dbReference>
<dbReference type="PANTHER" id="PTHR43418:SF7">
    <property type="entry name" value="CARBAMOYL-PHOSPHATE SYNTHASE SMALL CHAIN"/>
    <property type="match status" value="1"/>
</dbReference>
<dbReference type="PANTHER" id="PTHR43418">
    <property type="entry name" value="MULTIFUNCTIONAL TRYPTOPHAN BIOSYNTHESIS PROTEIN-RELATED"/>
    <property type="match status" value="1"/>
</dbReference>
<dbReference type="Pfam" id="PF00988">
    <property type="entry name" value="CPSase_sm_chain"/>
    <property type="match status" value="1"/>
</dbReference>
<dbReference type="Pfam" id="PF00117">
    <property type="entry name" value="GATase"/>
    <property type="match status" value="1"/>
</dbReference>
<dbReference type="PRINTS" id="PR00097">
    <property type="entry name" value="ANTSNTHASEII"/>
</dbReference>
<dbReference type="PRINTS" id="PR00099">
    <property type="entry name" value="CPSGATASE"/>
</dbReference>
<dbReference type="PRINTS" id="PR00096">
    <property type="entry name" value="GATASE"/>
</dbReference>
<dbReference type="SMART" id="SM01097">
    <property type="entry name" value="CPSase_sm_chain"/>
    <property type="match status" value="1"/>
</dbReference>
<dbReference type="SUPFAM" id="SSF52021">
    <property type="entry name" value="Carbamoyl phosphate synthetase, small subunit N-terminal domain"/>
    <property type="match status" value="1"/>
</dbReference>
<dbReference type="SUPFAM" id="SSF52317">
    <property type="entry name" value="Class I glutamine amidotransferase-like"/>
    <property type="match status" value="1"/>
</dbReference>
<dbReference type="PROSITE" id="PS51273">
    <property type="entry name" value="GATASE_TYPE_1"/>
    <property type="match status" value="1"/>
</dbReference>
<feature type="chain" id="PRO_0000112362" description="Carbamoyl phosphate synthase small chain">
    <location>
        <begin position="1"/>
        <end position="346"/>
    </location>
</feature>
<feature type="domain" description="Glutamine amidotransferase type-1" evidence="1">
    <location>
        <begin position="164"/>
        <end position="346"/>
    </location>
</feature>
<feature type="region of interest" description="CPSase" evidence="1">
    <location>
        <begin position="1"/>
        <end position="160"/>
    </location>
</feature>
<feature type="active site" description="Nucleophile" evidence="1">
    <location>
        <position position="237"/>
    </location>
</feature>
<feature type="active site" evidence="1">
    <location>
        <position position="320"/>
    </location>
</feature>
<feature type="active site" evidence="1">
    <location>
        <position position="322"/>
    </location>
</feature>
<feature type="binding site" evidence="1">
    <location>
        <position position="39"/>
    </location>
    <ligand>
        <name>L-glutamine</name>
        <dbReference type="ChEBI" id="CHEBI:58359"/>
    </ligand>
</feature>
<feature type="binding site" evidence="1">
    <location>
        <position position="209"/>
    </location>
    <ligand>
        <name>L-glutamine</name>
        <dbReference type="ChEBI" id="CHEBI:58359"/>
    </ligand>
</feature>
<feature type="binding site" evidence="1">
    <location>
        <position position="211"/>
    </location>
    <ligand>
        <name>L-glutamine</name>
        <dbReference type="ChEBI" id="CHEBI:58359"/>
    </ligand>
</feature>
<feature type="binding site" evidence="1">
    <location>
        <position position="238"/>
    </location>
    <ligand>
        <name>L-glutamine</name>
        <dbReference type="ChEBI" id="CHEBI:58359"/>
    </ligand>
</feature>
<feature type="binding site" evidence="1">
    <location>
        <position position="241"/>
    </location>
    <ligand>
        <name>L-glutamine</name>
        <dbReference type="ChEBI" id="CHEBI:58359"/>
    </ligand>
</feature>
<feature type="binding site" evidence="1">
    <location>
        <position position="280"/>
    </location>
    <ligand>
        <name>L-glutamine</name>
        <dbReference type="ChEBI" id="CHEBI:58359"/>
    </ligand>
</feature>
<feature type="binding site" evidence="1">
    <location>
        <position position="282"/>
    </location>
    <ligand>
        <name>L-glutamine</name>
        <dbReference type="ChEBI" id="CHEBI:58359"/>
    </ligand>
</feature>
<feature type="binding site" evidence="1">
    <location>
        <position position="283"/>
    </location>
    <ligand>
        <name>L-glutamine</name>
        <dbReference type="ChEBI" id="CHEBI:58359"/>
    </ligand>
</feature>
<sequence>MEDGSVFAGRLIGAEKIAVGEVVFTTSVVGYPQTLTDPSYKGQIITFTMPLIGNYGVSEDQLESDGIKAEGVVLFEATFPSHYKSVMSLEEWLASSGVPGVARVDTRALVQMLREHGVMMGAIGPEDPAVLMEALRKSPHYEDVVYVDMVSVKEPVLLGEGRLCIGVVDCGVKRSIVREFLKRGVRVKLVPCRRTELAFDCDALFISNGPGNPKLLDFLSAKVSEYVEYKKPLMGICLGHQVIAMALGAGIYKLKFGHRASNKPVRDIRFTGRTYITTHNHGYAVDPRGTDLKVWAVQPDDGTVEGLYHERLPILTTQWHPEASPGPQDTRWVFDKFLKLVERHGH</sequence>
<proteinExistence type="inferred from homology"/>
<name>CARA_PYRAE</name>
<accession>Q8ZY49</accession>
<gene>
    <name evidence="1" type="primary">carA</name>
    <name type="ordered locus">PAE0946</name>
</gene>